<feature type="chain" id="PRO_1000138047" description="N-succinylglutamate 5-semialdehyde dehydrogenase">
    <location>
        <begin position="1"/>
        <end position="492"/>
    </location>
</feature>
<feature type="active site" evidence="1">
    <location>
        <position position="243"/>
    </location>
</feature>
<feature type="active site" evidence="1">
    <location>
        <position position="277"/>
    </location>
</feature>
<feature type="binding site" evidence="1">
    <location>
        <begin position="220"/>
        <end position="225"/>
    </location>
    <ligand>
        <name>NAD(+)</name>
        <dbReference type="ChEBI" id="CHEBI:57540"/>
    </ligand>
</feature>
<comment type="function">
    <text evidence="1">Catalyzes the NAD-dependent reduction of succinylglutamate semialdehyde into succinylglutamate.</text>
</comment>
<comment type="catalytic activity">
    <reaction evidence="1">
        <text>N-succinyl-L-glutamate 5-semialdehyde + NAD(+) + H2O = N-succinyl-L-glutamate + NADH + 2 H(+)</text>
        <dbReference type="Rhea" id="RHEA:10812"/>
        <dbReference type="ChEBI" id="CHEBI:15377"/>
        <dbReference type="ChEBI" id="CHEBI:15378"/>
        <dbReference type="ChEBI" id="CHEBI:57540"/>
        <dbReference type="ChEBI" id="CHEBI:57945"/>
        <dbReference type="ChEBI" id="CHEBI:58520"/>
        <dbReference type="ChEBI" id="CHEBI:58763"/>
        <dbReference type="EC" id="1.2.1.71"/>
    </reaction>
</comment>
<comment type="pathway">
    <text evidence="1">Amino-acid degradation; L-arginine degradation via AST pathway; L-glutamate and succinate from L-arginine: step 4/5.</text>
</comment>
<comment type="similarity">
    <text evidence="1">Belongs to the aldehyde dehydrogenase family. AstD subfamily.</text>
</comment>
<evidence type="ECO:0000255" key="1">
    <source>
        <dbReference type="HAMAP-Rule" id="MF_01174"/>
    </source>
</evidence>
<name>ASTD_ECOSE</name>
<keyword id="KW-0056">Arginine metabolism</keyword>
<keyword id="KW-0520">NAD</keyword>
<keyword id="KW-0560">Oxidoreductase</keyword>
<sequence>MTLWINGDWITGQGASRVKRNPVSGEVLWQGNDADAAQVEQACRAARAAFPRWARLSLAERQVVVERFAGLLERNKGELTAIIARETGKPRWEAATEVTAMINKIAISIKAYHVRTGEQRSEMPDGAASLRHCPHGVLAVFGPYNFPGHLPNGHIVPALLAGNTIIFKPSELTPWSGEAVMRLWQQAGLPPGVLNLVQGGRETGQALSALEDLDGLLFTGSANTGYQLHRQLSGQPEKILALEMGGNNPLIIDEVADIDAAVHLTIQSAFVTAGQRCTCARRLLLKSGAQGDAFLARLVAVSQRLTPGNWDDEPQPFIGGLISEQAAQQVVTAWQQLEAMGGRTLLAPRLLQSETSLLTPGIIEMTGVAGVPDEEVFGPLLRVWRYDSFEEAILMANNTRFGLSCGLVSPEREKFDQLLLEARAGIVNWNKPLTGAASTAPFGGIGASGNHRPSAWYAADYCAWPMASLESDSLTLPATLNPGLDFSDEVVR</sequence>
<reference key="1">
    <citation type="journal article" date="2008" name="DNA Res.">
        <title>Complete genome sequence and comparative analysis of the wild-type commensal Escherichia coli strain SE11 isolated from a healthy adult.</title>
        <authorList>
            <person name="Oshima K."/>
            <person name="Toh H."/>
            <person name="Ogura Y."/>
            <person name="Sasamoto H."/>
            <person name="Morita H."/>
            <person name="Park S.-H."/>
            <person name="Ooka T."/>
            <person name="Iyoda S."/>
            <person name="Taylor T.D."/>
            <person name="Hayashi T."/>
            <person name="Itoh K."/>
            <person name="Hattori M."/>
        </authorList>
    </citation>
    <scope>NUCLEOTIDE SEQUENCE [LARGE SCALE GENOMIC DNA]</scope>
    <source>
        <strain>SE11</strain>
    </source>
</reference>
<proteinExistence type="inferred from homology"/>
<dbReference type="EC" id="1.2.1.71" evidence="1"/>
<dbReference type="EMBL" id="AP009240">
    <property type="protein sequence ID" value="BAG77440.1"/>
    <property type="molecule type" value="Genomic_DNA"/>
</dbReference>
<dbReference type="RefSeq" id="WP_000177210.1">
    <property type="nucleotide sequence ID" value="NC_011415.1"/>
</dbReference>
<dbReference type="SMR" id="B6IBG6"/>
<dbReference type="KEGG" id="ecy:ECSE_1916"/>
<dbReference type="HOGENOM" id="CLU_005391_1_0_6"/>
<dbReference type="UniPathway" id="UPA00185">
    <property type="reaction ID" value="UER00282"/>
</dbReference>
<dbReference type="Proteomes" id="UP000008199">
    <property type="component" value="Chromosome"/>
</dbReference>
<dbReference type="GO" id="GO:0004030">
    <property type="term" value="F:aldehyde dehydrogenase [NAD(P)+] activity"/>
    <property type="evidence" value="ECO:0007669"/>
    <property type="project" value="UniProtKB-ARBA"/>
</dbReference>
<dbReference type="GO" id="GO:0043824">
    <property type="term" value="F:succinylglutamate-semialdehyde dehydrogenase activity"/>
    <property type="evidence" value="ECO:0007669"/>
    <property type="project" value="UniProtKB-EC"/>
</dbReference>
<dbReference type="GO" id="GO:0019544">
    <property type="term" value="P:arginine catabolic process to glutamate"/>
    <property type="evidence" value="ECO:0007669"/>
    <property type="project" value="UniProtKB-UniRule"/>
</dbReference>
<dbReference type="GO" id="GO:0019545">
    <property type="term" value="P:arginine catabolic process to succinate"/>
    <property type="evidence" value="ECO:0007669"/>
    <property type="project" value="UniProtKB-UniRule"/>
</dbReference>
<dbReference type="CDD" id="cd07095">
    <property type="entry name" value="ALDH_SGSD_AstD"/>
    <property type="match status" value="1"/>
</dbReference>
<dbReference type="FunFam" id="3.40.309.10:FF:000013">
    <property type="entry name" value="N-succinylglutamate 5-semialdehyde dehydrogenase"/>
    <property type="match status" value="1"/>
</dbReference>
<dbReference type="FunFam" id="3.40.605.10:FF:000010">
    <property type="entry name" value="N-succinylglutamate 5-semialdehyde dehydrogenase"/>
    <property type="match status" value="1"/>
</dbReference>
<dbReference type="Gene3D" id="3.40.605.10">
    <property type="entry name" value="Aldehyde Dehydrogenase, Chain A, domain 1"/>
    <property type="match status" value="1"/>
</dbReference>
<dbReference type="Gene3D" id="3.40.309.10">
    <property type="entry name" value="Aldehyde Dehydrogenase, Chain A, domain 2"/>
    <property type="match status" value="1"/>
</dbReference>
<dbReference type="HAMAP" id="MF_01174">
    <property type="entry name" value="Aldedh_AstD"/>
    <property type="match status" value="1"/>
</dbReference>
<dbReference type="InterPro" id="IPR016161">
    <property type="entry name" value="Ald_DH/histidinol_DH"/>
</dbReference>
<dbReference type="InterPro" id="IPR016163">
    <property type="entry name" value="Ald_DH_C"/>
</dbReference>
<dbReference type="InterPro" id="IPR016160">
    <property type="entry name" value="Ald_DH_CS_CYS"/>
</dbReference>
<dbReference type="InterPro" id="IPR029510">
    <property type="entry name" value="Ald_DH_CS_GLU"/>
</dbReference>
<dbReference type="InterPro" id="IPR016162">
    <property type="entry name" value="Ald_DH_N"/>
</dbReference>
<dbReference type="InterPro" id="IPR015590">
    <property type="entry name" value="Aldehyde_DH_dom"/>
</dbReference>
<dbReference type="InterPro" id="IPR017649">
    <property type="entry name" value="SuccinylGlu_semiald_DH_AstD"/>
</dbReference>
<dbReference type="NCBIfam" id="TIGR03240">
    <property type="entry name" value="arg_catab_astD"/>
    <property type="match status" value="1"/>
</dbReference>
<dbReference type="NCBIfam" id="NF006992">
    <property type="entry name" value="PRK09457.1"/>
    <property type="match status" value="1"/>
</dbReference>
<dbReference type="PANTHER" id="PTHR11699">
    <property type="entry name" value="ALDEHYDE DEHYDROGENASE-RELATED"/>
    <property type="match status" value="1"/>
</dbReference>
<dbReference type="Pfam" id="PF00171">
    <property type="entry name" value="Aldedh"/>
    <property type="match status" value="1"/>
</dbReference>
<dbReference type="SUPFAM" id="SSF53720">
    <property type="entry name" value="ALDH-like"/>
    <property type="match status" value="1"/>
</dbReference>
<dbReference type="PROSITE" id="PS00070">
    <property type="entry name" value="ALDEHYDE_DEHYDR_CYS"/>
    <property type="match status" value="1"/>
</dbReference>
<dbReference type="PROSITE" id="PS00687">
    <property type="entry name" value="ALDEHYDE_DEHYDR_GLU"/>
    <property type="match status" value="1"/>
</dbReference>
<gene>
    <name evidence="1" type="primary">astD</name>
    <name type="ordered locus">ECSE_1916</name>
</gene>
<accession>B6IBG6</accession>
<protein>
    <recommendedName>
        <fullName evidence="1">N-succinylglutamate 5-semialdehyde dehydrogenase</fullName>
        <ecNumber evidence="1">1.2.1.71</ecNumber>
    </recommendedName>
    <alternativeName>
        <fullName evidence="1">Succinylglutamic semialdehyde dehydrogenase</fullName>
        <shortName evidence="1">SGSD</shortName>
    </alternativeName>
</protein>
<organism>
    <name type="scientific">Escherichia coli (strain SE11)</name>
    <dbReference type="NCBI Taxonomy" id="409438"/>
    <lineage>
        <taxon>Bacteria</taxon>
        <taxon>Pseudomonadati</taxon>
        <taxon>Pseudomonadota</taxon>
        <taxon>Gammaproteobacteria</taxon>
        <taxon>Enterobacterales</taxon>
        <taxon>Enterobacteriaceae</taxon>
        <taxon>Escherichia</taxon>
    </lineage>
</organism>